<keyword id="KW-0997">Cell inner membrane</keyword>
<keyword id="KW-1003">Cell membrane</keyword>
<keyword id="KW-0285">Flavoprotein</keyword>
<keyword id="KW-0288">FMN</keyword>
<keyword id="KW-0472">Membrane</keyword>
<keyword id="KW-0560">Oxidoreductase</keyword>
<keyword id="KW-1185">Reference proteome</keyword>
<protein>
    <recommendedName>
        <fullName evidence="1">L-lactate dehydrogenase</fullName>
        <ecNumber evidence="1">1.1.-.-</ecNumber>
    </recommendedName>
</protein>
<gene>
    <name evidence="1" type="primary">lldD</name>
    <name type="ordered locus">EcE24377A_4109</name>
</gene>
<organism>
    <name type="scientific">Escherichia coli O139:H28 (strain E24377A / ETEC)</name>
    <dbReference type="NCBI Taxonomy" id="331111"/>
    <lineage>
        <taxon>Bacteria</taxon>
        <taxon>Pseudomonadati</taxon>
        <taxon>Pseudomonadota</taxon>
        <taxon>Gammaproteobacteria</taxon>
        <taxon>Enterobacterales</taxon>
        <taxon>Enterobacteriaceae</taxon>
        <taxon>Escherichia</taxon>
    </lineage>
</organism>
<evidence type="ECO:0000255" key="1">
    <source>
        <dbReference type="HAMAP-Rule" id="MF_01559"/>
    </source>
</evidence>
<accession>A7ZTF9</accession>
<comment type="function">
    <text evidence="1">Catalyzes the conversion of L-lactate to pyruvate. Is coupled to the respiratory chain.</text>
</comment>
<comment type="catalytic activity">
    <reaction evidence="1">
        <text>(S)-lactate + A = pyruvate + AH2</text>
        <dbReference type="Rhea" id="RHEA:45816"/>
        <dbReference type="ChEBI" id="CHEBI:13193"/>
        <dbReference type="ChEBI" id="CHEBI:15361"/>
        <dbReference type="ChEBI" id="CHEBI:16651"/>
        <dbReference type="ChEBI" id="CHEBI:17499"/>
    </reaction>
</comment>
<comment type="cofactor">
    <cofactor evidence="1">
        <name>FMN</name>
        <dbReference type="ChEBI" id="CHEBI:58210"/>
    </cofactor>
</comment>
<comment type="subcellular location">
    <subcellularLocation>
        <location evidence="1">Cell inner membrane</location>
        <topology evidence="1">Peripheral membrane protein</topology>
    </subcellularLocation>
</comment>
<comment type="similarity">
    <text evidence="1">Belongs to the FMN-dependent alpha-hydroxy acid dehydrogenase family.</text>
</comment>
<sequence length="396" mass="42758">MIISAASDYRAAAQRILPPFLFHYMDGGAYSEYTLRRNVEDLSEVALRQRILKNMSDLSLETTLFNEKLSMPVALAPVGLCGMYARRGEVQAAKAADAHGIPFTLSTVSVCPIEEVAPAIKRPMWFQLYVLRDRGFMRNALERAKAAGCSTLVFTVDMPTPGARYRDAHSGMSGPNAAMRRYLQAVTHPQWAWDVGLNGRPHDLGNISAYLGKPTGLEDYIGWLGNNFDPSISWKDLEWIRDFWDGPMVIKGILDPEDARDAVRFGADGIVVSNHGGRQLDGVLSSARALPAIADAVKGDIAILADSGIRNGLDVVRMIALGADTVLLGRAFLYALATAGQAGVANLLNLIEKEMKVAMTLTGAKSISEITQDSLVQGLGKELPTALAPMAKGNAA</sequence>
<dbReference type="EC" id="1.1.-.-" evidence="1"/>
<dbReference type="EMBL" id="CP000800">
    <property type="protein sequence ID" value="ABV21091.1"/>
    <property type="molecule type" value="Genomic_DNA"/>
</dbReference>
<dbReference type="RefSeq" id="WP_000586964.1">
    <property type="nucleotide sequence ID" value="NC_009801.1"/>
</dbReference>
<dbReference type="SMR" id="A7ZTF9"/>
<dbReference type="GeneID" id="93778319"/>
<dbReference type="KEGG" id="ecw:EcE24377A_4109"/>
<dbReference type="HOGENOM" id="CLU_020639_0_0_6"/>
<dbReference type="Proteomes" id="UP000001122">
    <property type="component" value="Chromosome"/>
</dbReference>
<dbReference type="GO" id="GO:0005886">
    <property type="term" value="C:plasma membrane"/>
    <property type="evidence" value="ECO:0007669"/>
    <property type="project" value="UniProtKB-SubCell"/>
</dbReference>
<dbReference type="GO" id="GO:0010181">
    <property type="term" value="F:FMN binding"/>
    <property type="evidence" value="ECO:0007669"/>
    <property type="project" value="InterPro"/>
</dbReference>
<dbReference type="GO" id="GO:0004459">
    <property type="term" value="F:L-lactate dehydrogenase activity"/>
    <property type="evidence" value="ECO:0007669"/>
    <property type="project" value="UniProtKB-UniRule"/>
</dbReference>
<dbReference type="GO" id="GO:0009060">
    <property type="term" value="P:aerobic respiration"/>
    <property type="evidence" value="ECO:0007669"/>
    <property type="project" value="TreeGrafter"/>
</dbReference>
<dbReference type="GO" id="GO:0006089">
    <property type="term" value="P:lactate metabolic process"/>
    <property type="evidence" value="ECO:0007669"/>
    <property type="project" value="UniProtKB-UniRule"/>
</dbReference>
<dbReference type="CDD" id="cd02809">
    <property type="entry name" value="alpha_hydroxyacid_oxid_FMN"/>
    <property type="match status" value="1"/>
</dbReference>
<dbReference type="FunFam" id="3.20.20.70:FF:000029">
    <property type="entry name" value="L-lactate dehydrogenase"/>
    <property type="match status" value="1"/>
</dbReference>
<dbReference type="Gene3D" id="3.20.20.70">
    <property type="entry name" value="Aldolase class I"/>
    <property type="match status" value="1"/>
</dbReference>
<dbReference type="HAMAP" id="MF_01559">
    <property type="entry name" value="L_lact_dehydr"/>
    <property type="match status" value="1"/>
</dbReference>
<dbReference type="InterPro" id="IPR013785">
    <property type="entry name" value="Aldolase_TIM"/>
</dbReference>
<dbReference type="InterPro" id="IPR012133">
    <property type="entry name" value="Alpha-hydoxy_acid_DH_FMN"/>
</dbReference>
<dbReference type="InterPro" id="IPR000262">
    <property type="entry name" value="FMN-dep_DH"/>
</dbReference>
<dbReference type="InterPro" id="IPR037396">
    <property type="entry name" value="FMN_HAD"/>
</dbReference>
<dbReference type="InterPro" id="IPR008259">
    <property type="entry name" value="FMN_hydac_DH_AS"/>
</dbReference>
<dbReference type="InterPro" id="IPR020920">
    <property type="entry name" value="LldD"/>
</dbReference>
<dbReference type="NCBIfam" id="NF033901">
    <property type="entry name" value="L_lactate_LldD"/>
    <property type="match status" value="1"/>
</dbReference>
<dbReference type="NCBIfam" id="NF008398">
    <property type="entry name" value="PRK11197.1"/>
    <property type="match status" value="1"/>
</dbReference>
<dbReference type="PANTHER" id="PTHR10578:SF85">
    <property type="entry name" value="L-LACTATE DEHYDROGENASE"/>
    <property type="match status" value="1"/>
</dbReference>
<dbReference type="PANTHER" id="PTHR10578">
    <property type="entry name" value="S -2-HYDROXY-ACID OXIDASE-RELATED"/>
    <property type="match status" value="1"/>
</dbReference>
<dbReference type="Pfam" id="PF01070">
    <property type="entry name" value="FMN_dh"/>
    <property type="match status" value="1"/>
</dbReference>
<dbReference type="PIRSF" id="PIRSF000138">
    <property type="entry name" value="Al-hdrx_acd_dh"/>
    <property type="match status" value="1"/>
</dbReference>
<dbReference type="SUPFAM" id="SSF51395">
    <property type="entry name" value="FMN-linked oxidoreductases"/>
    <property type="match status" value="1"/>
</dbReference>
<dbReference type="PROSITE" id="PS00557">
    <property type="entry name" value="FMN_HYDROXY_ACID_DH_1"/>
    <property type="match status" value="1"/>
</dbReference>
<dbReference type="PROSITE" id="PS51349">
    <property type="entry name" value="FMN_HYDROXY_ACID_DH_2"/>
    <property type="match status" value="1"/>
</dbReference>
<name>LLDD_ECO24</name>
<feature type="chain" id="PRO_1000068979" description="L-lactate dehydrogenase">
    <location>
        <begin position="1"/>
        <end position="396"/>
    </location>
</feature>
<feature type="domain" description="FMN hydroxy acid dehydrogenase" evidence="1">
    <location>
        <begin position="1"/>
        <end position="380"/>
    </location>
</feature>
<feature type="active site" description="Proton acceptor" evidence="1">
    <location>
        <position position="275"/>
    </location>
</feature>
<feature type="binding site" evidence="1">
    <location>
        <position position="24"/>
    </location>
    <ligand>
        <name>substrate</name>
    </ligand>
</feature>
<feature type="binding site" evidence="1">
    <location>
        <position position="106"/>
    </location>
    <ligand>
        <name>FMN</name>
        <dbReference type="ChEBI" id="CHEBI:58210"/>
    </ligand>
</feature>
<feature type="binding site" evidence="1">
    <location>
        <position position="127"/>
    </location>
    <ligand>
        <name>FMN</name>
        <dbReference type="ChEBI" id="CHEBI:58210"/>
    </ligand>
</feature>
<feature type="binding site" evidence="1">
    <location>
        <position position="129"/>
    </location>
    <ligand>
        <name>substrate</name>
    </ligand>
</feature>
<feature type="binding site" evidence="1">
    <location>
        <position position="155"/>
    </location>
    <ligand>
        <name>FMN</name>
        <dbReference type="ChEBI" id="CHEBI:58210"/>
    </ligand>
</feature>
<feature type="binding site" evidence="1">
    <location>
        <position position="164"/>
    </location>
    <ligand>
        <name>substrate</name>
    </ligand>
</feature>
<feature type="binding site" evidence="1">
    <location>
        <position position="251"/>
    </location>
    <ligand>
        <name>FMN</name>
        <dbReference type="ChEBI" id="CHEBI:58210"/>
    </ligand>
</feature>
<feature type="binding site" evidence="1">
    <location>
        <position position="278"/>
    </location>
    <ligand>
        <name>substrate</name>
    </ligand>
</feature>
<feature type="binding site" evidence="1">
    <location>
        <begin position="306"/>
        <end position="330"/>
    </location>
    <ligand>
        <name>FMN</name>
        <dbReference type="ChEBI" id="CHEBI:58210"/>
    </ligand>
</feature>
<proteinExistence type="inferred from homology"/>
<reference key="1">
    <citation type="journal article" date="2008" name="J. Bacteriol.">
        <title>The pangenome structure of Escherichia coli: comparative genomic analysis of E. coli commensal and pathogenic isolates.</title>
        <authorList>
            <person name="Rasko D.A."/>
            <person name="Rosovitz M.J."/>
            <person name="Myers G.S.A."/>
            <person name="Mongodin E.F."/>
            <person name="Fricke W.F."/>
            <person name="Gajer P."/>
            <person name="Crabtree J."/>
            <person name="Sebaihia M."/>
            <person name="Thomson N.R."/>
            <person name="Chaudhuri R."/>
            <person name="Henderson I.R."/>
            <person name="Sperandio V."/>
            <person name="Ravel J."/>
        </authorList>
    </citation>
    <scope>NUCLEOTIDE SEQUENCE [LARGE SCALE GENOMIC DNA]</scope>
    <source>
        <strain>E24377A / ETEC</strain>
    </source>
</reference>